<name>SPIN1_HUMAN</name>
<dbReference type="EMBL" id="AF106682">
    <property type="protein sequence ID" value="AAD43035.1"/>
    <property type="status" value="ALT_FRAME"/>
    <property type="molecule type" value="mRNA"/>
</dbReference>
<dbReference type="EMBL" id="AF087864">
    <property type="protein sequence ID" value="AAG48367.1"/>
    <property type="status" value="ALT_INIT"/>
    <property type="molecule type" value="mRNA"/>
</dbReference>
<dbReference type="EMBL" id="AF317228">
    <property type="protein sequence ID" value="AAG38112.1"/>
    <property type="status" value="ALT_INIT"/>
    <property type="molecule type" value="mRNA"/>
</dbReference>
<dbReference type="EMBL" id="AL136719">
    <property type="protein sequence ID" value="CAB66653.1"/>
    <property type="status" value="ALT_SEQ"/>
    <property type="molecule type" value="mRNA"/>
</dbReference>
<dbReference type="EMBL" id="BT007314">
    <property type="protein sequence ID" value="AAP35978.1"/>
    <property type="molecule type" value="mRNA"/>
</dbReference>
<dbReference type="EMBL" id="AK092017">
    <property type="protein sequence ID" value="BAG52466.1"/>
    <property type="molecule type" value="mRNA"/>
</dbReference>
<dbReference type="EMBL" id="AK289691">
    <property type="protein sequence ID" value="BAF82380.1"/>
    <property type="molecule type" value="mRNA"/>
</dbReference>
<dbReference type="EMBL" id="AK290009">
    <property type="protein sequence ID" value="BAF82698.1"/>
    <property type="molecule type" value="mRNA"/>
</dbReference>
<dbReference type="EMBL" id="AK315854">
    <property type="protein sequence ID" value="BAF98745.1"/>
    <property type="molecule type" value="mRNA"/>
</dbReference>
<dbReference type="EMBL" id="AL353748">
    <property type="status" value="NOT_ANNOTATED_CDS"/>
    <property type="molecule type" value="Genomic_DNA"/>
</dbReference>
<dbReference type="EMBL" id="CH471089">
    <property type="protein sequence ID" value="EAW62753.1"/>
    <property type="molecule type" value="Genomic_DNA"/>
</dbReference>
<dbReference type="EMBL" id="BC013571">
    <property type="status" value="NOT_ANNOTATED_CDS"/>
    <property type="molecule type" value="mRNA"/>
</dbReference>
<dbReference type="EMBL" id="BC114515">
    <property type="protein sequence ID" value="AAI14516.1"/>
    <property type="molecule type" value="mRNA"/>
</dbReference>
<dbReference type="EMBL" id="BC114565">
    <property type="protein sequence ID" value="AAI14566.1"/>
    <property type="molecule type" value="mRNA"/>
</dbReference>
<dbReference type="EMBL" id="CR533484">
    <property type="protein sequence ID" value="CAG38515.1"/>
    <property type="status" value="ALT_SEQ"/>
    <property type="molecule type" value="mRNA"/>
</dbReference>
<dbReference type="CCDS" id="CCDS43843.1"/>
<dbReference type="RefSeq" id="NP_006708.2">
    <property type="nucleotide sequence ID" value="NM_006717.3"/>
</dbReference>
<dbReference type="PDB" id="2NS2">
    <property type="method" value="X-ray"/>
    <property type="resolution" value="2.20 A"/>
    <property type="chains" value="A/B=26-262"/>
</dbReference>
<dbReference type="PDB" id="4H75">
    <property type="method" value="X-ray"/>
    <property type="resolution" value="2.10 A"/>
    <property type="chains" value="A=27-262"/>
</dbReference>
<dbReference type="PDB" id="4MZF">
    <property type="method" value="X-ray"/>
    <property type="resolution" value="2.10 A"/>
    <property type="chains" value="B=50-262"/>
</dbReference>
<dbReference type="PDB" id="4MZG">
    <property type="method" value="X-ray"/>
    <property type="resolution" value="1.70 A"/>
    <property type="chains" value="B/D=50-262"/>
</dbReference>
<dbReference type="PDB" id="4MZH">
    <property type="method" value="X-ray"/>
    <property type="resolution" value="2.20 A"/>
    <property type="chains" value="A=50-262"/>
</dbReference>
<dbReference type="PDB" id="5JSG">
    <property type="method" value="X-ray"/>
    <property type="resolution" value="2.50 A"/>
    <property type="chains" value="A/B=50-262"/>
</dbReference>
<dbReference type="PDB" id="5JSJ">
    <property type="method" value="X-ray"/>
    <property type="resolution" value="2.35 A"/>
    <property type="chains" value="A/B=50-262"/>
</dbReference>
<dbReference type="PDB" id="5Y5W">
    <property type="method" value="X-ray"/>
    <property type="resolution" value="3.30 A"/>
    <property type="chains" value="A/B/C/D=51-262"/>
</dbReference>
<dbReference type="PDB" id="6I8B">
    <property type="method" value="X-ray"/>
    <property type="resolution" value="1.76 A"/>
    <property type="chains" value="B/E=48-262"/>
</dbReference>
<dbReference type="PDB" id="6I8L">
    <property type="method" value="X-ray"/>
    <property type="resolution" value="1.58 A"/>
    <property type="chains" value="B=48-262"/>
</dbReference>
<dbReference type="PDB" id="6I8Y">
    <property type="method" value="X-ray"/>
    <property type="resolution" value="1.52 A"/>
    <property type="chains" value="A=48-262"/>
</dbReference>
<dbReference type="PDB" id="6QPL">
    <property type="method" value="X-ray"/>
    <property type="resolution" value="1.60 A"/>
    <property type="chains" value="B=48-262"/>
</dbReference>
<dbReference type="PDB" id="7BQZ">
    <property type="method" value="X-ray"/>
    <property type="resolution" value="3.10 A"/>
    <property type="chains" value="A/C/E/G=45-262"/>
</dbReference>
<dbReference type="PDB" id="7BU9">
    <property type="method" value="X-ray"/>
    <property type="resolution" value="3.50 A"/>
    <property type="chains" value="A/C/E/G=45-262"/>
</dbReference>
<dbReference type="PDB" id="7CNA">
    <property type="method" value="X-ray"/>
    <property type="resolution" value="1.60 A"/>
    <property type="chains" value="A/D=51-262"/>
</dbReference>
<dbReference type="PDB" id="7E9M">
    <property type="method" value="X-ray"/>
    <property type="resolution" value="2.50 A"/>
    <property type="chains" value="A/C=1-262"/>
</dbReference>
<dbReference type="PDB" id="7EA1">
    <property type="method" value="X-ray"/>
    <property type="resolution" value="2.70 A"/>
    <property type="chains" value="A/C=50-262"/>
</dbReference>
<dbReference type="PDB" id="7OCB">
    <property type="method" value="X-ray"/>
    <property type="resolution" value="1.42 A"/>
    <property type="chains" value="B=48-262"/>
</dbReference>
<dbReference type="PDB" id="8GTX">
    <property type="method" value="X-ray"/>
    <property type="resolution" value="1.80 A"/>
    <property type="chains" value="A=50-262"/>
</dbReference>
<dbReference type="PDBsum" id="2NS2"/>
<dbReference type="PDBsum" id="4H75"/>
<dbReference type="PDBsum" id="4MZF"/>
<dbReference type="PDBsum" id="4MZG"/>
<dbReference type="PDBsum" id="4MZH"/>
<dbReference type="PDBsum" id="5JSG"/>
<dbReference type="PDBsum" id="5JSJ"/>
<dbReference type="PDBsum" id="5Y5W"/>
<dbReference type="PDBsum" id="6I8B"/>
<dbReference type="PDBsum" id="6I8L"/>
<dbReference type="PDBsum" id="6I8Y"/>
<dbReference type="PDBsum" id="6QPL"/>
<dbReference type="PDBsum" id="7BQZ"/>
<dbReference type="PDBsum" id="7BU9"/>
<dbReference type="PDBsum" id="7CNA"/>
<dbReference type="PDBsum" id="7E9M"/>
<dbReference type="PDBsum" id="7EA1"/>
<dbReference type="PDBsum" id="7OCB"/>
<dbReference type="PDBsum" id="8GTX"/>
<dbReference type="SMR" id="Q9Y657"/>
<dbReference type="BioGRID" id="116130">
    <property type="interactions" value="111"/>
</dbReference>
<dbReference type="DIP" id="DIP-40062N"/>
<dbReference type="FunCoup" id="Q9Y657">
    <property type="interactions" value="3034"/>
</dbReference>
<dbReference type="IntAct" id="Q9Y657">
    <property type="interactions" value="47"/>
</dbReference>
<dbReference type="MINT" id="Q9Y657"/>
<dbReference type="STRING" id="9606.ENSP00000365019"/>
<dbReference type="BindingDB" id="Q9Y657"/>
<dbReference type="ChEMBL" id="CHEMBL4523509"/>
<dbReference type="GuidetoPHARMACOLOGY" id="3274"/>
<dbReference type="GlyGen" id="Q9Y657">
    <property type="glycosylation" value="1 site, 1 O-linked glycan (1 site)"/>
</dbReference>
<dbReference type="iPTMnet" id="Q9Y657"/>
<dbReference type="PhosphoSitePlus" id="Q9Y657"/>
<dbReference type="BioMuta" id="SPIN1"/>
<dbReference type="DMDM" id="93141317"/>
<dbReference type="jPOST" id="Q9Y657"/>
<dbReference type="MassIVE" id="Q9Y657"/>
<dbReference type="PaxDb" id="9606-ENSP00000365019"/>
<dbReference type="PeptideAtlas" id="Q9Y657"/>
<dbReference type="ProteomicsDB" id="86603"/>
<dbReference type="Pumba" id="Q9Y657"/>
<dbReference type="Antibodypedia" id="6817">
    <property type="antibodies" value="200 antibodies from 30 providers"/>
</dbReference>
<dbReference type="DNASU" id="10927"/>
<dbReference type="Ensembl" id="ENST00000375859.4">
    <property type="protein sequence ID" value="ENSP00000365019.3"/>
    <property type="gene ID" value="ENSG00000106723.17"/>
</dbReference>
<dbReference type="GeneID" id="10927"/>
<dbReference type="KEGG" id="hsa:10927"/>
<dbReference type="MANE-Select" id="ENST00000375859.4">
    <property type="protein sequence ID" value="ENSP00000365019.3"/>
    <property type="RefSeq nucleotide sequence ID" value="NM_006717.3"/>
    <property type="RefSeq protein sequence ID" value="NP_006708.2"/>
</dbReference>
<dbReference type="UCSC" id="uc004apy.4">
    <property type="organism name" value="human"/>
</dbReference>
<dbReference type="AGR" id="HGNC:11243"/>
<dbReference type="CTD" id="10927"/>
<dbReference type="DisGeNET" id="10927"/>
<dbReference type="GeneCards" id="SPIN1"/>
<dbReference type="HGNC" id="HGNC:11243">
    <property type="gene designation" value="SPIN1"/>
</dbReference>
<dbReference type="HPA" id="ENSG00000106723">
    <property type="expression patterns" value="Low tissue specificity"/>
</dbReference>
<dbReference type="MIM" id="609936">
    <property type="type" value="gene"/>
</dbReference>
<dbReference type="neXtProt" id="NX_Q9Y657"/>
<dbReference type="OpenTargets" id="ENSG00000106723"/>
<dbReference type="PharmGKB" id="PA162404504"/>
<dbReference type="VEuPathDB" id="HostDB:ENSG00000106723"/>
<dbReference type="eggNOG" id="ENOG502QRYD">
    <property type="taxonomic scope" value="Eukaryota"/>
</dbReference>
<dbReference type="GeneTree" id="ENSGT00950000182925"/>
<dbReference type="HOGENOM" id="CLU_068595_0_0_1"/>
<dbReference type="InParanoid" id="Q9Y657"/>
<dbReference type="OMA" id="CMCEYRK"/>
<dbReference type="OrthoDB" id="9944558at2759"/>
<dbReference type="PAN-GO" id="Q9Y657">
    <property type="GO annotations" value="4 GO annotations based on evolutionary models"/>
</dbReference>
<dbReference type="PhylomeDB" id="Q9Y657"/>
<dbReference type="TreeFam" id="TF332665"/>
<dbReference type="PathwayCommons" id="Q9Y657"/>
<dbReference type="SignaLink" id="Q9Y657"/>
<dbReference type="SIGNOR" id="Q9Y657"/>
<dbReference type="BioGRID-ORCS" id="10927">
    <property type="hits" value="15 hits in 1167 CRISPR screens"/>
</dbReference>
<dbReference type="CD-CODE" id="91857CE7">
    <property type="entry name" value="Nucleolus"/>
</dbReference>
<dbReference type="ChiTaRS" id="SPIN1">
    <property type="organism name" value="human"/>
</dbReference>
<dbReference type="EvolutionaryTrace" id="Q9Y657"/>
<dbReference type="GeneWiki" id="SPIN1"/>
<dbReference type="GenomeRNAi" id="10927"/>
<dbReference type="Pharos" id="Q9Y657">
    <property type="development level" value="Tchem"/>
</dbReference>
<dbReference type="PRO" id="PR:Q9Y657"/>
<dbReference type="Proteomes" id="UP000005640">
    <property type="component" value="Chromosome 9"/>
</dbReference>
<dbReference type="RNAct" id="Q9Y657">
    <property type="molecule type" value="protein"/>
</dbReference>
<dbReference type="Bgee" id="ENSG00000106723">
    <property type="expression patterns" value="Expressed in postcentral gyrus and 205 other cell types or tissues"/>
</dbReference>
<dbReference type="ExpressionAtlas" id="Q9Y657">
    <property type="expression patterns" value="baseline and differential"/>
</dbReference>
<dbReference type="GO" id="GO:0000785">
    <property type="term" value="C:chromatin"/>
    <property type="evidence" value="ECO:0000250"/>
    <property type="project" value="UniProtKB"/>
</dbReference>
<dbReference type="GO" id="GO:0005829">
    <property type="term" value="C:cytosol"/>
    <property type="evidence" value="ECO:0000314"/>
    <property type="project" value="HPA"/>
</dbReference>
<dbReference type="GO" id="GO:0031965">
    <property type="term" value="C:nuclear membrane"/>
    <property type="evidence" value="ECO:0000314"/>
    <property type="project" value="HPA"/>
</dbReference>
<dbReference type="GO" id="GO:0005730">
    <property type="term" value="C:nucleolus"/>
    <property type="evidence" value="ECO:0000314"/>
    <property type="project" value="UniProtKB"/>
</dbReference>
<dbReference type="GO" id="GO:0005654">
    <property type="term" value="C:nucleoplasm"/>
    <property type="evidence" value="ECO:0000314"/>
    <property type="project" value="HPA"/>
</dbReference>
<dbReference type="GO" id="GO:0005634">
    <property type="term" value="C:nucleus"/>
    <property type="evidence" value="ECO:0000314"/>
    <property type="project" value="UniProtKB"/>
</dbReference>
<dbReference type="GO" id="GO:0005819">
    <property type="term" value="C:spindle"/>
    <property type="evidence" value="ECO:0007669"/>
    <property type="project" value="Ensembl"/>
</dbReference>
<dbReference type="GO" id="GO:0140002">
    <property type="term" value="F:histone H3K4me3 reader activity"/>
    <property type="evidence" value="ECO:0000314"/>
    <property type="project" value="UniProtKB"/>
</dbReference>
<dbReference type="GO" id="GO:0140566">
    <property type="term" value="F:histone reader activity"/>
    <property type="evidence" value="ECO:0000314"/>
    <property type="project" value="UniProtKB"/>
</dbReference>
<dbReference type="GO" id="GO:0035064">
    <property type="term" value="F:methylated histone binding"/>
    <property type="evidence" value="ECO:0000314"/>
    <property type="project" value="UniProtKB"/>
</dbReference>
<dbReference type="GO" id="GO:0007276">
    <property type="term" value="P:gamete generation"/>
    <property type="evidence" value="ECO:0007669"/>
    <property type="project" value="InterPro"/>
</dbReference>
<dbReference type="GO" id="GO:0051321">
    <property type="term" value="P:meiotic cell cycle"/>
    <property type="evidence" value="ECO:0007669"/>
    <property type="project" value="UniProtKB-KW"/>
</dbReference>
<dbReference type="GO" id="GO:0045893">
    <property type="term" value="P:positive regulation of DNA-templated transcription"/>
    <property type="evidence" value="ECO:0000314"/>
    <property type="project" value="UniProtKB"/>
</dbReference>
<dbReference type="GO" id="GO:0030177">
    <property type="term" value="P:positive regulation of Wnt signaling pathway"/>
    <property type="evidence" value="ECO:0000314"/>
    <property type="project" value="UniProtKB"/>
</dbReference>
<dbReference type="GO" id="GO:0071168">
    <property type="term" value="P:protein localization to chromatin"/>
    <property type="evidence" value="ECO:0000250"/>
    <property type="project" value="UniProtKB"/>
</dbReference>
<dbReference type="GO" id="GO:0006355">
    <property type="term" value="P:regulation of DNA-templated transcription"/>
    <property type="evidence" value="ECO:0000318"/>
    <property type="project" value="GO_Central"/>
</dbReference>
<dbReference type="GO" id="GO:0009303">
    <property type="term" value="P:rRNA transcription"/>
    <property type="evidence" value="ECO:0000314"/>
    <property type="project" value="UniProtKB"/>
</dbReference>
<dbReference type="GO" id="GO:0141196">
    <property type="term" value="P:transposable element silencing by piRNA-mediated DNA methylation"/>
    <property type="evidence" value="ECO:0000250"/>
    <property type="project" value="UniProtKB"/>
</dbReference>
<dbReference type="GO" id="GO:0016055">
    <property type="term" value="P:Wnt signaling pathway"/>
    <property type="evidence" value="ECO:0007669"/>
    <property type="project" value="UniProtKB-KW"/>
</dbReference>
<dbReference type="FunFam" id="2.80.10.70:FF:000001">
    <property type="entry name" value="Spindlin 1"/>
    <property type="match status" value="1"/>
</dbReference>
<dbReference type="Gene3D" id="2.80.10.70">
    <property type="entry name" value="Spindlin/Ssty"/>
    <property type="match status" value="1"/>
</dbReference>
<dbReference type="IDEAL" id="IID00591"/>
<dbReference type="InterPro" id="IPR003671">
    <property type="entry name" value="SPIN/Ssty"/>
</dbReference>
<dbReference type="InterPro" id="IPR042567">
    <property type="entry name" value="SPIN/Ssty_sf"/>
</dbReference>
<dbReference type="PANTHER" id="PTHR10405">
    <property type="entry name" value="SPINDLIN"/>
    <property type="match status" value="1"/>
</dbReference>
<dbReference type="Pfam" id="PF02513">
    <property type="entry name" value="Spin-Ssty"/>
    <property type="match status" value="3"/>
</dbReference>
<sequence length="262" mass="29601">MKTPFGKTPGQRSRADAGHAGVSANMMKKRTSHKKHRSSVGPSKPVSQPRRNIVGCRIQHGWKEGNGPVTQWKGTVLDQVPVNPSLYLIKYDGFDCVYGLELNKDERVSALEVLPDRVATSRISDAHLADTMIGKAVEHMFETEDGSKDEWRGMVLARAPVMNTWFYITYEKDPVLYMYQLLDDYKEGDLRIMPDSNDSPPAEREPGEVVDSLVGKQVEYAKEDGSKRTGMVIHQVEAKPSVYFIKFDDDFHIYVYDLVKTS</sequence>
<evidence type="ECO:0000250" key="1">
    <source>
        <dbReference type="UniProtKB" id="Q61142"/>
    </source>
</evidence>
<evidence type="ECO:0000256" key="2">
    <source>
        <dbReference type="SAM" id="MobiDB-lite"/>
    </source>
</evidence>
<evidence type="ECO:0000269" key="3">
    <source>
    </source>
</evidence>
<evidence type="ECO:0000269" key="4">
    <source>
    </source>
</evidence>
<evidence type="ECO:0000269" key="5">
    <source>
    </source>
</evidence>
<evidence type="ECO:0000269" key="6">
    <source>
    </source>
</evidence>
<evidence type="ECO:0000269" key="7">
    <source>
    </source>
</evidence>
<evidence type="ECO:0000269" key="8">
    <source>
    </source>
</evidence>
<evidence type="ECO:0000269" key="9">
    <source>
    </source>
</evidence>
<evidence type="ECO:0000269" key="10">
    <source>
    </source>
</evidence>
<evidence type="ECO:0000303" key="11">
    <source>
    </source>
</evidence>
<evidence type="ECO:0000303" key="12">
    <source ref="2"/>
</evidence>
<evidence type="ECO:0000305" key="13"/>
<evidence type="ECO:0000312" key="14">
    <source>
        <dbReference type="HGNC" id="HGNC:11243"/>
    </source>
</evidence>
<evidence type="ECO:0007744" key="15">
    <source>
        <dbReference type="PDB" id="7CNA"/>
    </source>
</evidence>
<evidence type="ECO:0007744" key="16">
    <source>
    </source>
</evidence>
<evidence type="ECO:0007744" key="17">
    <source>
    </source>
</evidence>
<evidence type="ECO:0007744" key="18">
    <source>
    </source>
</evidence>
<evidence type="ECO:0007744" key="19">
    <source>
    </source>
</evidence>
<evidence type="ECO:0007829" key="20">
    <source>
        <dbReference type="PDB" id="2NS2"/>
    </source>
</evidence>
<evidence type="ECO:0007829" key="21">
    <source>
        <dbReference type="PDB" id="4H75"/>
    </source>
</evidence>
<evidence type="ECO:0007829" key="22">
    <source>
        <dbReference type="PDB" id="4MZH"/>
    </source>
</evidence>
<evidence type="ECO:0007829" key="23">
    <source>
        <dbReference type="PDB" id="6I8B"/>
    </source>
</evidence>
<evidence type="ECO:0007829" key="24">
    <source>
        <dbReference type="PDB" id="7CNA"/>
    </source>
</evidence>
<evidence type="ECO:0007829" key="25">
    <source>
        <dbReference type="PDB" id="7OCB"/>
    </source>
</evidence>
<proteinExistence type="evidence at protein level"/>
<protein>
    <recommendedName>
        <fullName evidence="13">Spindlin-1</fullName>
    </recommendedName>
    <alternativeName>
        <fullName>Ovarian cancer-related protein</fullName>
    </alternativeName>
    <alternativeName>
        <fullName evidence="11">Spindlin1</fullName>
    </alternativeName>
</protein>
<gene>
    <name evidence="14" type="primary">SPIN1</name>
    <name type="synonym">OCR</name>
    <name evidence="12" type="synonym">SPIN</name>
</gene>
<organism>
    <name type="scientific">Homo sapiens</name>
    <name type="common">Human</name>
    <dbReference type="NCBI Taxonomy" id="9606"/>
    <lineage>
        <taxon>Eukaryota</taxon>
        <taxon>Metazoa</taxon>
        <taxon>Chordata</taxon>
        <taxon>Craniata</taxon>
        <taxon>Vertebrata</taxon>
        <taxon>Euteleostomi</taxon>
        <taxon>Mammalia</taxon>
        <taxon>Eutheria</taxon>
        <taxon>Euarchontoglires</taxon>
        <taxon>Primates</taxon>
        <taxon>Haplorrhini</taxon>
        <taxon>Catarrhini</taxon>
        <taxon>Hominidae</taxon>
        <taxon>Homo</taxon>
    </lineage>
</organism>
<accession>Q9Y657</accession>
<accession>A8K0X6</accession>
<accession>B3KRQ4</accession>
<accession>Q7KZJ8</accession>
<accession>Q9GZT2</accession>
<accession>Q9H0N7</accession>
<comment type="function">
    <text evidence="1 5 6 8 9 10">Chromatin reader that specifically recognizes and binds histone H3 both trimethylated at 'Lys-4' and 'Lys-9' (H3K4me3K9me3) and is involved in piRNA-mediated retrotransposon silencing during spermatogenesis (PubMed:33574238). Plays a key role in the initiation of the PIWIL4-piRNA pathway, a pathway that directs transposon DNA methylation and silencing in the male embryonic germ cells, by promoting recruitment of DNA methylation machinery to transposons: binds young, but not old, LINE1 transposons, which are specifically marked with H3K4me3K9me3, and promotes the recruitment of PIWIL4 and SPOCD1 to transposons, leading to piRNA-directed DNA methylation (By similarity). Also recognizes and binds histone H3 both trimethylated at 'Lys-4' and asymmetrically dimethylated at 'Arg-8' (H3K4me3 and H3R8me2a) and acts as an activator of Wnt signaling pathway downstream of PRMT2 (PubMed:22258766, PubMed:29061846). In case of cancer, promotes cell cancer proliferation via activation of the Wnt signaling pathway (PubMed:24589551). Overexpression induces metaphase arrest and chromosomal instability. Localizes to active rDNA loci and promotes the expression of rRNA genes (PubMed:21960006). May play a role in cell-cycle regulation during the transition from gamete to embryo (By similarity). Involved in oocyte meiotic resumption, a process that takes place before ovulation to resume meiosis of oocytes blocked in prophase I: may act by regulating maternal transcripts to control meiotic resumption (By similarity).</text>
</comment>
<comment type="subunit">
    <text evidence="1 4 6 7 8 9 10">Homodimer; may form higher-order oligomers (PubMed:17082182). Interacts with TCF7L2/TCF4; the interaction is direct (PubMed:22258766, PubMed:24589551, PubMed:29061846). Interacts with HABP4 and SERBP1 (By similarity). Interacts with SPINDOC; SPINDOC stabilizes SPIN1 and enhances its association with bivalent H3K4me3K9me3 mark (PubMed:29061846, PubMed:33574238). Interacts with SPOCD1; promoting recruitment of PIWIL4 and SPOCD1 to transposons (By similarity).</text>
</comment>
<comment type="interaction">
    <interactant intactId="EBI-727129">
        <id>Q9Y657</id>
    </interactant>
    <interactant intactId="EBI-352682">
        <id>P04792</id>
        <label>HSPB1</label>
    </interactant>
    <organismsDiffer>false</organismsDiffer>
    <experiments>2</experiments>
</comment>
<comment type="subcellular location">
    <subcellularLocation>
        <location evidence="3 9">Nucleus</location>
    </subcellularLocation>
    <subcellularLocation>
        <location evidence="5">Nucleus</location>
        <location evidence="5">Nucleolus</location>
    </subcellularLocation>
</comment>
<comment type="tissue specificity">
    <text evidence="6">Highly expressed in ovarian cancer tissues.</text>
</comment>
<comment type="domain">
    <text evidence="4 7 8">The 3 tudor-like domains (also named Spin/Ssty repeats) specifically recognize and bind methylated histones (PubMed:23077255, PubMed:24589551). H3K4me3 and H3R8me2a are recognized by tudor-like domains 2 and 1, respectively (PubMed:24589551).</text>
</comment>
<comment type="PTM">
    <text evidence="1">Phosphorylated during oocyte meiotic maturation.</text>
</comment>
<comment type="similarity">
    <text evidence="13">Belongs to the SPIN/STSY family.</text>
</comment>
<comment type="sequence caution" evidence="13">
    <conflict type="frameshift">
        <sequence resource="EMBL-CDS" id="AAD43035"/>
    </conflict>
</comment>
<comment type="sequence caution" evidence="13">
    <conflict type="erroneous initiation">
        <sequence resource="EMBL-CDS" id="AAG38112"/>
    </conflict>
    <text>Truncated N-terminus.</text>
</comment>
<comment type="sequence caution" evidence="13">
    <conflict type="erroneous initiation">
        <sequence resource="EMBL-CDS" id="AAG48367"/>
    </conflict>
    <text>Truncated N-terminus.</text>
</comment>
<comment type="sequence caution" evidence="13">
    <conflict type="erroneous termination">
        <sequence resource="EMBL-CDS" id="CAB66653"/>
    </conflict>
    <text>Truncated C-terminus.</text>
</comment>
<comment type="sequence caution" evidence="13">
    <conflict type="erroneous termination">
        <sequence resource="EMBL-CDS" id="CAG38515"/>
    </conflict>
    <text>Truncated C-terminus.</text>
</comment>
<reference key="1">
    <citation type="submission" date="1998-11" db="EMBL/GenBank/DDBJ databases">
        <authorList>
            <person name="Peng Y."/>
            <person name="Song H."/>
            <person name="Dai M."/>
            <person name="Huang Q."/>
            <person name="Mao Y."/>
            <person name="Zhang Q."/>
            <person name="Mao M."/>
            <person name="Fu G."/>
            <person name="Luo M."/>
            <person name="Chen J."/>
            <person name="Hu R."/>
        </authorList>
    </citation>
    <scope>NUCLEOTIDE SEQUENCE [MRNA]</scope>
    <source>
        <tissue>Pituitary</tissue>
    </source>
</reference>
<reference key="2">
    <citation type="journal article" date="2000" name="Chin. Sci. Bull.">
        <title>Cloning, characterization and mapping of human SPIN to human chromosome 9q22.1-22.3.</title>
        <authorList>
            <person name="Zhang H.L."/>
            <person name="Yu L."/>
            <person name="Wang X."/>
            <person name="Chen Z."/>
            <person name="Tu Q."/>
            <person name="Chen J.Q."/>
            <person name="Ding J.B."/>
            <person name="Gao J."/>
            <person name="Zhao S.Y."/>
        </authorList>
    </citation>
    <scope>NUCLEOTIDE SEQUENCE [MRNA]</scope>
</reference>
<reference key="3">
    <citation type="journal article" date="2005" name="Biochem. Biophys. Res. Commun.">
        <title>Spindlin1, a novel nuclear protein with a role in the transformation of NIH3T3 cells.</title>
        <authorList>
            <person name="Gao Y."/>
            <person name="Yue W."/>
            <person name="Zhang P."/>
            <person name="Li L."/>
            <person name="Xie X."/>
            <person name="Yuan H."/>
            <person name="Chen L."/>
            <person name="Liu D."/>
            <person name="Yan F."/>
            <person name="Pei X."/>
        </authorList>
    </citation>
    <scope>NUCLEOTIDE SEQUENCE [MRNA]</scope>
    <scope>SUBCELLULAR LOCATION</scope>
    <source>
        <tissue>Ovarian carcinoma</tissue>
    </source>
</reference>
<reference key="4">
    <citation type="journal article" date="2001" name="Genome Res.">
        <title>Towards a catalog of human genes and proteins: sequencing and analysis of 500 novel complete protein coding human cDNAs.</title>
        <authorList>
            <person name="Wiemann S."/>
            <person name="Weil B."/>
            <person name="Wellenreuther R."/>
            <person name="Gassenhuber J."/>
            <person name="Glassl S."/>
            <person name="Ansorge W."/>
            <person name="Boecher M."/>
            <person name="Bloecker H."/>
            <person name="Bauersachs S."/>
            <person name="Blum H."/>
            <person name="Lauber J."/>
            <person name="Duesterhoeft A."/>
            <person name="Beyer A."/>
            <person name="Koehrer K."/>
            <person name="Strack N."/>
            <person name="Mewes H.-W."/>
            <person name="Ottenwaelder B."/>
            <person name="Obermaier B."/>
            <person name="Tampe J."/>
            <person name="Heubner D."/>
            <person name="Wambutt R."/>
            <person name="Korn B."/>
            <person name="Klein M."/>
            <person name="Poustka A."/>
        </authorList>
    </citation>
    <scope>NUCLEOTIDE SEQUENCE [LARGE SCALE MRNA]</scope>
    <source>
        <tissue>Fetal kidney</tissue>
    </source>
</reference>
<reference key="5">
    <citation type="submission" date="2003-05" db="EMBL/GenBank/DDBJ databases">
        <title>Cloning of human full-length CDSs in BD Creator(TM) system donor vector.</title>
        <authorList>
            <person name="Kalnine N."/>
            <person name="Chen X."/>
            <person name="Rolfs A."/>
            <person name="Halleck A."/>
            <person name="Hines L."/>
            <person name="Eisenstein S."/>
            <person name="Koundinya M."/>
            <person name="Raphael J."/>
            <person name="Moreira D."/>
            <person name="Kelley T."/>
            <person name="LaBaer J."/>
            <person name="Lin Y."/>
            <person name="Phelan M."/>
            <person name="Farmer A."/>
        </authorList>
    </citation>
    <scope>NUCLEOTIDE SEQUENCE [LARGE SCALE MRNA]</scope>
</reference>
<reference key="6">
    <citation type="journal article" date="2004" name="Nat. Genet.">
        <title>Complete sequencing and characterization of 21,243 full-length human cDNAs.</title>
        <authorList>
            <person name="Ota T."/>
            <person name="Suzuki Y."/>
            <person name="Nishikawa T."/>
            <person name="Otsuki T."/>
            <person name="Sugiyama T."/>
            <person name="Irie R."/>
            <person name="Wakamatsu A."/>
            <person name="Hayashi K."/>
            <person name="Sato H."/>
            <person name="Nagai K."/>
            <person name="Kimura K."/>
            <person name="Makita H."/>
            <person name="Sekine M."/>
            <person name="Obayashi M."/>
            <person name="Nishi T."/>
            <person name="Shibahara T."/>
            <person name="Tanaka T."/>
            <person name="Ishii S."/>
            <person name="Yamamoto J."/>
            <person name="Saito K."/>
            <person name="Kawai Y."/>
            <person name="Isono Y."/>
            <person name="Nakamura Y."/>
            <person name="Nagahari K."/>
            <person name="Murakami K."/>
            <person name="Yasuda T."/>
            <person name="Iwayanagi T."/>
            <person name="Wagatsuma M."/>
            <person name="Shiratori A."/>
            <person name="Sudo H."/>
            <person name="Hosoiri T."/>
            <person name="Kaku Y."/>
            <person name="Kodaira H."/>
            <person name="Kondo H."/>
            <person name="Sugawara M."/>
            <person name="Takahashi M."/>
            <person name="Kanda K."/>
            <person name="Yokoi T."/>
            <person name="Furuya T."/>
            <person name="Kikkawa E."/>
            <person name="Omura Y."/>
            <person name="Abe K."/>
            <person name="Kamihara K."/>
            <person name="Katsuta N."/>
            <person name="Sato K."/>
            <person name="Tanikawa M."/>
            <person name="Yamazaki M."/>
            <person name="Ninomiya K."/>
            <person name="Ishibashi T."/>
            <person name="Yamashita H."/>
            <person name="Murakawa K."/>
            <person name="Fujimori K."/>
            <person name="Tanai H."/>
            <person name="Kimata M."/>
            <person name="Watanabe M."/>
            <person name="Hiraoka S."/>
            <person name="Chiba Y."/>
            <person name="Ishida S."/>
            <person name="Ono Y."/>
            <person name="Takiguchi S."/>
            <person name="Watanabe S."/>
            <person name="Yosida M."/>
            <person name="Hotuta T."/>
            <person name="Kusano J."/>
            <person name="Kanehori K."/>
            <person name="Takahashi-Fujii A."/>
            <person name="Hara H."/>
            <person name="Tanase T.-O."/>
            <person name="Nomura Y."/>
            <person name="Togiya S."/>
            <person name="Komai F."/>
            <person name="Hara R."/>
            <person name="Takeuchi K."/>
            <person name="Arita M."/>
            <person name="Imose N."/>
            <person name="Musashino K."/>
            <person name="Yuuki H."/>
            <person name="Oshima A."/>
            <person name="Sasaki N."/>
            <person name="Aotsuka S."/>
            <person name="Yoshikawa Y."/>
            <person name="Matsunawa H."/>
            <person name="Ichihara T."/>
            <person name="Shiohata N."/>
            <person name="Sano S."/>
            <person name="Moriya S."/>
            <person name="Momiyama H."/>
            <person name="Satoh N."/>
            <person name="Takami S."/>
            <person name="Terashima Y."/>
            <person name="Suzuki O."/>
            <person name="Nakagawa S."/>
            <person name="Senoh A."/>
            <person name="Mizoguchi H."/>
            <person name="Goto Y."/>
            <person name="Shimizu F."/>
            <person name="Wakebe H."/>
            <person name="Hishigaki H."/>
            <person name="Watanabe T."/>
            <person name="Sugiyama A."/>
            <person name="Takemoto M."/>
            <person name="Kawakami B."/>
            <person name="Yamazaki M."/>
            <person name="Watanabe K."/>
            <person name="Kumagai A."/>
            <person name="Itakura S."/>
            <person name="Fukuzumi Y."/>
            <person name="Fujimori Y."/>
            <person name="Komiyama M."/>
            <person name="Tashiro H."/>
            <person name="Tanigami A."/>
            <person name="Fujiwara T."/>
            <person name="Ono T."/>
            <person name="Yamada K."/>
            <person name="Fujii Y."/>
            <person name="Ozaki K."/>
            <person name="Hirao M."/>
            <person name="Ohmori Y."/>
            <person name="Kawabata A."/>
            <person name="Hikiji T."/>
            <person name="Kobatake N."/>
            <person name="Inagaki H."/>
            <person name="Ikema Y."/>
            <person name="Okamoto S."/>
            <person name="Okitani R."/>
            <person name="Kawakami T."/>
            <person name="Noguchi S."/>
            <person name="Itoh T."/>
            <person name="Shigeta K."/>
            <person name="Senba T."/>
            <person name="Matsumura K."/>
            <person name="Nakajima Y."/>
            <person name="Mizuno T."/>
            <person name="Morinaga M."/>
            <person name="Sasaki M."/>
            <person name="Togashi T."/>
            <person name="Oyama M."/>
            <person name="Hata H."/>
            <person name="Watanabe M."/>
            <person name="Komatsu T."/>
            <person name="Mizushima-Sugano J."/>
            <person name="Satoh T."/>
            <person name="Shirai Y."/>
            <person name="Takahashi Y."/>
            <person name="Nakagawa K."/>
            <person name="Okumura K."/>
            <person name="Nagase T."/>
            <person name="Nomura N."/>
            <person name="Kikuchi H."/>
            <person name="Masuho Y."/>
            <person name="Yamashita R."/>
            <person name="Nakai K."/>
            <person name="Yada T."/>
            <person name="Nakamura Y."/>
            <person name="Ohara O."/>
            <person name="Isogai T."/>
            <person name="Sugano S."/>
        </authorList>
    </citation>
    <scope>NUCLEOTIDE SEQUENCE [LARGE SCALE MRNA]</scope>
    <source>
        <tissue>Amygdala</tissue>
        <tissue>Hippocampus</tissue>
        <tissue>Trachea</tissue>
    </source>
</reference>
<reference key="7">
    <citation type="journal article" date="2004" name="Nature">
        <title>DNA sequence and analysis of human chromosome 9.</title>
        <authorList>
            <person name="Humphray S.J."/>
            <person name="Oliver K."/>
            <person name="Hunt A.R."/>
            <person name="Plumb R.W."/>
            <person name="Loveland J.E."/>
            <person name="Howe K.L."/>
            <person name="Andrews T.D."/>
            <person name="Searle S."/>
            <person name="Hunt S.E."/>
            <person name="Scott C.E."/>
            <person name="Jones M.C."/>
            <person name="Ainscough R."/>
            <person name="Almeida J.P."/>
            <person name="Ambrose K.D."/>
            <person name="Ashwell R.I.S."/>
            <person name="Babbage A.K."/>
            <person name="Babbage S."/>
            <person name="Bagguley C.L."/>
            <person name="Bailey J."/>
            <person name="Banerjee R."/>
            <person name="Barker D.J."/>
            <person name="Barlow K.F."/>
            <person name="Bates K."/>
            <person name="Beasley H."/>
            <person name="Beasley O."/>
            <person name="Bird C.P."/>
            <person name="Bray-Allen S."/>
            <person name="Brown A.J."/>
            <person name="Brown J.Y."/>
            <person name="Burford D."/>
            <person name="Burrill W."/>
            <person name="Burton J."/>
            <person name="Carder C."/>
            <person name="Carter N.P."/>
            <person name="Chapman J.C."/>
            <person name="Chen Y."/>
            <person name="Clarke G."/>
            <person name="Clark S.Y."/>
            <person name="Clee C.M."/>
            <person name="Clegg S."/>
            <person name="Collier R.E."/>
            <person name="Corby N."/>
            <person name="Crosier M."/>
            <person name="Cummings A.T."/>
            <person name="Davies J."/>
            <person name="Dhami P."/>
            <person name="Dunn M."/>
            <person name="Dutta I."/>
            <person name="Dyer L.W."/>
            <person name="Earthrowl M.E."/>
            <person name="Faulkner L."/>
            <person name="Fleming C.J."/>
            <person name="Frankish A."/>
            <person name="Frankland J.A."/>
            <person name="French L."/>
            <person name="Fricker D.G."/>
            <person name="Garner P."/>
            <person name="Garnett J."/>
            <person name="Ghori J."/>
            <person name="Gilbert J.G.R."/>
            <person name="Glison C."/>
            <person name="Grafham D.V."/>
            <person name="Gribble S."/>
            <person name="Griffiths C."/>
            <person name="Griffiths-Jones S."/>
            <person name="Grocock R."/>
            <person name="Guy J."/>
            <person name="Hall R.E."/>
            <person name="Hammond S."/>
            <person name="Harley J.L."/>
            <person name="Harrison E.S.I."/>
            <person name="Hart E.A."/>
            <person name="Heath P.D."/>
            <person name="Henderson C.D."/>
            <person name="Hopkins B.L."/>
            <person name="Howard P.J."/>
            <person name="Howden P.J."/>
            <person name="Huckle E."/>
            <person name="Johnson C."/>
            <person name="Johnson D."/>
            <person name="Joy A.A."/>
            <person name="Kay M."/>
            <person name="Keenan S."/>
            <person name="Kershaw J.K."/>
            <person name="Kimberley A.M."/>
            <person name="King A."/>
            <person name="Knights A."/>
            <person name="Laird G.K."/>
            <person name="Langford C."/>
            <person name="Lawlor S."/>
            <person name="Leongamornlert D.A."/>
            <person name="Leversha M."/>
            <person name="Lloyd C."/>
            <person name="Lloyd D.M."/>
            <person name="Lovell J."/>
            <person name="Martin S."/>
            <person name="Mashreghi-Mohammadi M."/>
            <person name="Matthews L."/>
            <person name="McLaren S."/>
            <person name="McLay K.E."/>
            <person name="McMurray A."/>
            <person name="Milne S."/>
            <person name="Nickerson T."/>
            <person name="Nisbett J."/>
            <person name="Nordsiek G."/>
            <person name="Pearce A.V."/>
            <person name="Peck A.I."/>
            <person name="Porter K.M."/>
            <person name="Pandian R."/>
            <person name="Pelan S."/>
            <person name="Phillimore B."/>
            <person name="Povey S."/>
            <person name="Ramsey Y."/>
            <person name="Rand V."/>
            <person name="Scharfe M."/>
            <person name="Sehra H.K."/>
            <person name="Shownkeen R."/>
            <person name="Sims S.K."/>
            <person name="Skuce C.D."/>
            <person name="Smith M."/>
            <person name="Steward C.A."/>
            <person name="Swarbreck D."/>
            <person name="Sycamore N."/>
            <person name="Tester J."/>
            <person name="Thorpe A."/>
            <person name="Tracey A."/>
            <person name="Tromans A."/>
            <person name="Thomas D.W."/>
            <person name="Wall M."/>
            <person name="Wallis J.M."/>
            <person name="West A.P."/>
            <person name="Whitehead S.L."/>
            <person name="Willey D.L."/>
            <person name="Williams S.A."/>
            <person name="Wilming L."/>
            <person name="Wray P.W."/>
            <person name="Young L."/>
            <person name="Ashurst J.L."/>
            <person name="Coulson A."/>
            <person name="Blocker H."/>
            <person name="Durbin R.M."/>
            <person name="Sulston J.E."/>
            <person name="Hubbard T."/>
            <person name="Jackson M.J."/>
            <person name="Bentley D.R."/>
            <person name="Beck S."/>
            <person name="Rogers J."/>
            <person name="Dunham I."/>
        </authorList>
    </citation>
    <scope>NUCLEOTIDE SEQUENCE [LARGE SCALE GENOMIC DNA]</scope>
</reference>
<reference key="8">
    <citation type="submission" date="2005-07" db="EMBL/GenBank/DDBJ databases">
        <authorList>
            <person name="Mural R.J."/>
            <person name="Istrail S."/>
            <person name="Sutton G."/>
            <person name="Florea L."/>
            <person name="Halpern A.L."/>
            <person name="Mobarry C.M."/>
            <person name="Lippert R."/>
            <person name="Walenz B."/>
            <person name="Shatkay H."/>
            <person name="Dew I."/>
            <person name="Miller J.R."/>
            <person name="Flanigan M.J."/>
            <person name="Edwards N.J."/>
            <person name="Bolanos R."/>
            <person name="Fasulo D."/>
            <person name="Halldorsson B.V."/>
            <person name="Hannenhalli S."/>
            <person name="Turner R."/>
            <person name="Yooseph S."/>
            <person name="Lu F."/>
            <person name="Nusskern D.R."/>
            <person name="Shue B.C."/>
            <person name="Zheng X.H."/>
            <person name="Zhong F."/>
            <person name="Delcher A.L."/>
            <person name="Huson D.H."/>
            <person name="Kravitz S.A."/>
            <person name="Mouchard L."/>
            <person name="Reinert K."/>
            <person name="Remington K.A."/>
            <person name="Clark A.G."/>
            <person name="Waterman M.S."/>
            <person name="Eichler E.E."/>
            <person name="Adams M.D."/>
            <person name="Hunkapiller M.W."/>
            <person name="Myers E.W."/>
            <person name="Venter J.C."/>
        </authorList>
    </citation>
    <scope>NUCLEOTIDE SEQUENCE [LARGE SCALE GENOMIC DNA]</scope>
</reference>
<reference key="9">
    <citation type="journal article" date="2004" name="Genome Res.">
        <title>The status, quality, and expansion of the NIH full-length cDNA project: the Mammalian Gene Collection (MGC).</title>
        <authorList>
            <consortium name="The MGC Project Team"/>
        </authorList>
    </citation>
    <scope>NUCLEOTIDE SEQUENCE [LARGE SCALE MRNA]</scope>
    <source>
        <tissue>Uterus</tissue>
    </source>
</reference>
<reference key="10">
    <citation type="submission" date="2004-06" db="EMBL/GenBank/DDBJ databases">
        <title>Cloning of human full open reading frames in Gateway(TM) system entry vector (pDONR201).</title>
        <authorList>
            <person name="Ebert L."/>
            <person name="Schick M."/>
            <person name="Neubert P."/>
            <person name="Schatten R."/>
            <person name="Henze S."/>
            <person name="Korn B."/>
        </authorList>
    </citation>
    <scope>NUCLEOTIDE SEQUENCE [LARGE SCALE MRNA] OF 1-225</scope>
</reference>
<reference key="11">
    <citation type="journal article" date="2008" name="Proc. Natl. Acad. Sci. U.S.A.">
        <title>A quantitative atlas of mitotic phosphorylation.</title>
        <authorList>
            <person name="Dephoure N."/>
            <person name="Zhou C."/>
            <person name="Villen J."/>
            <person name="Beausoleil S.A."/>
            <person name="Bakalarski C.E."/>
            <person name="Elledge S.J."/>
            <person name="Gygi S.P."/>
        </authorList>
    </citation>
    <scope>PHOSPHORYLATION [LARGE SCALE ANALYSIS] AT SER-124 AND SER-199</scope>
    <scope>IDENTIFICATION BY MASS SPECTROMETRY [LARGE SCALE ANALYSIS]</scope>
    <source>
        <tissue>Cervix carcinoma</tissue>
    </source>
</reference>
<reference key="12">
    <citation type="journal article" date="2010" name="Sci. Signal.">
        <title>Quantitative phosphoproteomics reveals widespread full phosphorylation site occupancy during mitosis.</title>
        <authorList>
            <person name="Olsen J.V."/>
            <person name="Vermeulen M."/>
            <person name="Santamaria A."/>
            <person name="Kumar C."/>
            <person name="Miller M.L."/>
            <person name="Jensen L.J."/>
            <person name="Gnad F."/>
            <person name="Cox J."/>
            <person name="Jensen T.S."/>
            <person name="Nigg E.A."/>
            <person name="Brunak S."/>
            <person name="Mann M."/>
        </authorList>
    </citation>
    <scope>PHOSPHORYLATION [LARGE SCALE ANALYSIS] AT SER-124</scope>
    <scope>IDENTIFICATION BY MASS SPECTROMETRY [LARGE SCALE ANALYSIS]</scope>
    <source>
        <tissue>Cervix carcinoma</tissue>
    </source>
</reference>
<reference key="13">
    <citation type="journal article" date="2011" name="EMBO Rep.">
        <title>Nucleolar protein Spindlin1 recognizes H3K4 methylation and stimulates the expression of rRNA genes.</title>
        <authorList>
            <person name="Wang W."/>
            <person name="Chen Z."/>
            <person name="Mao Z."/>
            <person name="Zhang H."/>
            <person name="Ding X."/>
            <person name="Chen S."/>
            <person name="Zhang X."/>
            <person name="Xu R."/>
            <person name="Zhu B."/>
        </authorList>
    </citation>
    <scope>FUNCTION</scope>
    <scope>SUBCELLULAR LOCATION</scope>
    <scope>MUTAGENESIS OF PHE-141 AND TYR-170</scope>
</reference>
<reference key="14">
    <citation type="journal article" date="2012" name="Mol. Cancer Res.">
        <title>SPINDLIN1 promotes cancer cell proliferation through activation of WNT/TCF-4 signaling.</title>
        <authorList>
            <person name="Wang J.X."/>
            <person name="Zeng Q."/>
            <person name="Chen L."/>
            <person name="Du J.C."/>
            <person name="Yan X.L."/>
            <person name="Yuan H.F."/>
            <person name="Zhai C."/>
            <person name="Zhou J.N."/>
            <person name="Jia Y.L."/>
            <person name="Yue W."/>
            <person name="Pei X.T."/>
        </authorList>
    </citation>
    <scope>FUNCTION</scope>
    <scope>INTERACTION WITH TCF7L2</scope>
    <scope>PHOSPHORYLATION AT SER-109 AND SER-124</scope>
    <scope>MUTAGENESIS OF SER-109 AND SER-124</scope>
    <scope>TISSUE SPECIFICITY</scope>
</reference>
<reference key="15">
    <citation type="journal article" date="2012" name="Proc. Natl. Acad. Sci. U.S.A.">
        <title>N-terminal acetylome analyses and functional insights of the N-terminal acetyltransferase NatB.</title>
        <authorList>
            <person name="Van Damme P."/>
            <person name="Lasa M."/>
            <person name="Polevoda B."/>
            <person name="Gazquez C."/>
            <person name="Elosegui-Artola A."/>
            <person name="Kim D.S."/>
            <person name="De Juan-Pardo E."/>
            <person name="Demeyer K."/>
            <person name="Hole K."/>
            <person name="Larrea E."/>
            <person name="Timmerman E."/>
            <person name="Prieto J."/>
            <person name="Arnesen T."/>
            <person name="Sherman F."/>
            <person name="Gevaert K."/>
            <person name="Aldabe R."/>
        </authorList>
    </citation>
    <scope>IDENTIFICATION BY MASS SPECTROMETRY [LARGE SCALE ANALYSIS]</scope>
</reference>
<reference key="16">
    <citation type="journal article" date="2013" name="J. Proteome Res.">
        <title>Toward a comprehensive characterization of a human cancer cell phosphoproteome.</title>
        <authorList>
            <person name="Zhou H."/>
            <person name="Di Palma S."/>
            <person name="Preisinger C."/>
            <person name="Peng M."/>
            <person name="Polat A.N."/>
            <person name="Heck A.J."/>
            <person name="Mohammed S."/>
        </authorList>
    </citation>
    <scope>PHOSPHORYLATION [LARGE SCALE ANALYSIS] AT SER-124 AND SER-199</scope>
    <scope>IDENTIFICATION BY MASS SPECTROMETRY [LARGE SCALE ANALYSIS]</scope>
    <source>
        <tissue>Cervix carcinoma</tissue>
        <tissue>Erythroleukemia</tissue>
    </source>
</reference>
<reference key="17">
    <citation type="journal article" date="2017" name="J. Biol. Chem.">
        <title>A transcriptional coregulator, SPIN-DOC, attenuates the coactivator activity of Spindlin1.</title>
        <authorList>
            <person name="Bae N."/>
            <person name="Gao M."/>
            <person name="Li X."/>
            <person name="Premkumar T."/>
            <person name="Sbardella G."/>
            <person name="Chen J."/>
            <person name="Bedford M.T."/>
        </authorList>
    </citation>
    <scope>FUNCTION</scope>
    <scope>INTERACTION WITH TCF7L2 AND C11ORF84/SPINDOC</scope>
    <scope>SUBCELLULAR LOCATION</scope>
</reference>
<reference key="18">
    <citation type="journal article" date="2017" name="Nat. Struct. Mol. Biol.">
        <title>Site-specific mapping of the human SUMO proteome reveals co-modification with phosphorylation.</title>
        <authorList>
            <person name="Hendriks I.A."/>
            <person name="Lyon D."/>
            <person name="Young C."/>
            <person name="Jensen L.J."/>
            <person name="Vertegaal A.C."/>
            <person name="Nielsen M.L."/>
        </authorList>
    </citation>
    <scope>SUMOYLATION [LARGE SCALE ANALYSIS] AT LYS-7; LYS-28 AND LYS-44</scope>
    <scope>IDENTIFICATION BY MASS SPECTROMETRY [LARGE SCALE ANALYSIS]</scope>
</reference>
<reference key="19">
    <citation type="journal article" date="2007" name="J. Biol. Chem.">
        <title>Structure of human spindlin1. Tandem tudor-like domains for cell cycle regulation.</title>
        <authorList>
            <person name="Zhao Q."/>
            <person name="Qin L."/>
            <person name="Jiang F."/>
            <person name="Wu B."/>
            <person name="Yue W."/>
            <person name="Xu F."/>
            <person name="Rong Z."/>
            <person name="Yuan H."/>
            <person name="Xie X."/>
            <person name="Gao Y."/>
            <person name="Bai C."/>
            <person name="Bartlam M."/>
            <person name="Pei X."/>
            <person name="Rao Z."/>
        </authorList>
    </citation>
    <scope>X-RAY CRYSTALLOGRAPHY (2.2 ANGSTROMS) OF 26-262 IN COMPLEX WITH PHOSPHATE IONS</scope>
    <scope>DNA-BINDING</scope>
    <scope>SUBUNIT</scope>
    <scope>DOMAINS TUDOR-LIKE</scope>
</reference>
<reference key="20">
    <citation type="journal article" date="2012" name="Proc. Natl. Acad. Sci. U.S.A.">
        <title>Distinct mode of methylated lysine-4 of histone H3 recognition by tandem tudor-like domains of Spindlin1.</title>
        <authorList>
            <person name="Yang N."/>
            <person name="Wang W."/>
            <person name="Wang Y."/>
            <person name="Wang M."/>
            <person name="Zhao Q."/>
            <person name="Rao Z."/>
            <person name="Zhu B."/>
            <person name="Xu R.M."/>
        </authorList>
    </citation>
    <scope>X-RAY CRYSTALLOGRAPHY (2.10 ANGSTROMS) OF 27-262 IN COMPLEX WITH METHYLATED HISTONE H3</scope>
    <scope>MUTAGENESIS OF ASP-184 AND ASP-189</scope>
</reference>
<reference key="21">
    <citation type="journal article" date="2014" name="Genes Dev.">
        <title>Molecular basis underlying histone H3 lysine-arginine methylation pattern readout by Spin/Ssty repeats of Spindlin1.</title>
        <authorList>
            <person name="Su X."/>
            <person name="Zhu G."/>
            <person name="Ding X."/>
            <person name="Lee S.Y."/>
            <person name="Dou Y."/>
            <person name="Zhu B."/>
            <person name="Wu W."/>
            <person name="Li H."/>
        </authorList>
    </citation>
    <scope>X-RAY CRYSTALLOGRAPHY (1.7 ANGSTROMS) OF 50-262 IN COMPLEX WITH METHYLATED HISTONE H3</scope>
    <scope>FUNCTION</scope>
    <scope>INTERACTION WITH TCF7L2</scope>
    <scope>MUTAGENESIS OF TRP-72; TYR-98; PHE-141; GLU-142; TYR-170; TYR-177; ASP-184 AND PHE-251</scope>
</reference>
<reference evidence="15" key="22">
    <citation type="journal article" date="2021" name="Nat. Commun.">
        <title>Structural mechanism of bivalent histone H3K4me3K9me3 recognition by the Spindlin1/C11orf84 complex in rRNA transcription activation.</title>
        <authorList>
            <person name="Du Y."/>
            <person name="Yan Y."/>
            <person name="Xie S."/>
            <person name="Huang H."/>
            <person name="Wang X."/>
            <person name="Ng R.K."/>
            <person name="Zhou M.M."/>
            <person name="Qian C."/>
        </authorList>
    </citation>
    <scope>X-RAY CRYSTALLOGRAPHY (1.60 ANGSTROMS) OF 51-262 IN COMPLEX WITH SPINDOC</scope>
    <scope>FUNCTION</scope>
    <scope>INTERACTION WITH SPINDOC</scope>
    <scope>MUTAGENESIS OF TRP-62; TRP-72; TYR-91; TYR-98 AND PHE-141</scope>
</reference>
<feature type="chain" id="PRO_0000181367" description="Spindlin-1">
    <location>
        <begin position="1"/>
        <end position="262"/>
    </location>
</feature>
<feature type="region of interest" description="Disordered" evidence="2">
    <location>
        <begin position="1"/>
        <end position="51"/>
    </location>
</feature>
<feature type="region of interest" description="Tudor-like domain 1" evidence="7 8">
    <location>
        <begin position="53"/>
        <end position="116"/>
    </location>
</feature>
<feature type="region of interest" description="Histone H3K4me3 and H3R8me2a binding" evidence="7 8">
    <location>
        <begin position="93"/>
        <end position="98"/>
    </location>
</feature>
<feature type="region of interest" description="Tudor-like domain 2" evidence="7 8">
    <location>
        <begin position="132"/>
        <end position="193"/>
    </location>
</feature>
<feature type="region of interest" description="Histone H3K4me3 and H3R8me2a binding" evidence="7 8">
    <location>
        <position position="142"/>
    </location>
</feature>
<feature type="region of interest" description="Tudor-like domain 3" evidence="7 8">
    <location>
        <begin position="213"/>
        <end position="262"/>
    </location>
</feature>
<feature type="region of interest" description="Histone H3K4me3 and H3R8me2a binding" evidence="7 8">
    <location>
        <begin position="250"/>
        <end position="252"/>
    </location>
</feature>
<feature type="compositionally biased region" description="Basic residues" evidence="2">
    <location>
        <begin position="27"/>
        <end position="38"/>
    </location>
</feature>
<feature type="site" description="Histone H3K4me3 and H3R8me2a binding" evidence="7 8">
    <location>
        <position position="173"/>
    </location>
</feature>
<feature type="site" description="Histone H3K4me3 and H3R8me2a binding" evidence="7 8">
    <location>
        <position position="180"/>
    </location>
</feature>
<feature type="site" description="Histone H3K4me3 and H3R8me2a binding" evidence="7 8">
    <location>
        <position position="184"/>
    </location>
</feature>
<feature type="modified residue" description="N6-acetyllysine; alternate" evidence="1">
    <location>
        <position position="44"/>
    </location>
</feature>
<feature type="modified residue" description="Phosphoserine; by AURKA" evidence="6">
    <location>
        <position position="109"/>
    </location>
</feature>
<feature type="modified residue" description="Phosphoserine; by AURKA" evidence="6 16 17 18">
    <location>
        <position position="124"/>
    </location>
</feature>
<feature type="modified residue" description="Phosphoserine" evidence="16 18">
    <location>
        <position position="199"/>
    </location>
</feature>
<feature type="cross-link" description="Glycyl lysine isopeptide (Lys-Gly) (interchain with G-Cter in SUMO2)" evidence="19">
    <location>
        <position position="7"/>
    </location>
</feature>
<feature type="cross-link" description="Glycyl lysine isopeptide (Lys-Gly) (interchain with G-Cter in SUMO2)" evidence="19">
    <location>
        <position position="28"/>
    </location>
</feature>
<feature type="cross-link" description="Glycyl lysine isopeptide (Lys-Gly) (interchain with G-Cter in SUMO2); alternate" evidence="19">
    <location>
        <position position="44"/>
    </location>
</feature>
<feature type="sequence variant" id="VAR_053690" description="In dbSNP:rs34794905.">
    <original>A</original>
    <variation>P</variation>
    <location>
        <position position="221"/>
    </location>
</feature>
<feature type="mutagenesis site" description="Decreased binding to histone H3 trimethylated at both 'Lys-4' and 'Lys-9' (H3K4me3K9me3)." evidence="10">
    <original>W</original>
    <variation>A</variation>
    <location>
        <position position="62"/>
    </location>
</feature>
<feature type="mutagenesis site" description="Impaired binding to histone H3K4me3 and H3R8me2a and impaired ability to activate the Wnt signaling pathway. ecreased binding to histone H3 trimethylated at both 'Lys-4' and 'Lys-9' (H3K4me3K9me3)." evidence="8 10">
    <original>W</original>
    <variation>A</variation>
    <variation>R</variation>
    <location>
        <position position="72"/>
    </location>
</feature>
<feature type="mutagenesis site" description="Decreased binding to histone H3 trimethylated at both 'Lys-4' and 'Lys-9' (H3K4me3K9me3)." evidence="10">
    <original>Y</original>
    <variation>A</variation>
    <location>
        <position position="91"/>
    </location>
</feature>
<feature type="mutagenesis site" description="Decreased binding to histone H3 trimethylated at both 'Lys-4' and 'Lys-9' (H3K4me3K9me3)." evidence="10">
    <original>Y</original>
    <variation>A</variation>
    <location>
        <position position="98"/>
    </location>
</feature>
<feature type="mutagenesis site" description="Impaired binding to histone H3K4me3 and H3R8me2a and impaired ability to activate the Wnt signaling pathway." evidence="8">
    <original>Y</original>
    <variation>R</variation>
    <location>
        <position position="98"/>
    </location>
</feature>
<feature type="mutagenesis site" description="Impaired phosphorylation." evidence="6">
    <original>S</original>
    <variation>A</variation>
    <location>
        <position position="109"/>
    </location>
</feature>
<feature type="mutagenesis site" description="Impaired phosphorylation." evidence="6">
    <original>S</original>
    <variation>A</variation>
    <location>
        <position position="124"/>
    </location>
</feature>
<feature type="mutagenesis site" description="Impaired binding to histone H3K4me3 and H3R8me2a and impaired ability to activate the Wnt signaling pathway. Impaired ability to activate expression of pre-rRNA. Nearly abolished binding to histone H3 trimethylated at both 'Lys-4' and 'Lys-9' (H3K4me3K9me3)." evidence="5 8 10">
    <original>F</original>
    <variation>A</variation>
    <location>
        <position position="141"/>
    </location>
</feature>
<feature type="mutagenesis site" description="Impaired binding to histone H3K4me3 and H3R8me2a." evidence="8">
    <original>E</original>
    <variation>A</variation>
    <location>
        <position position="142"/>
    </location>
</feature>
<feature type="mutagenesis site" description="Impaired binding to histone H3K4me3 and H3R8me2a and impaired ability to activate the Wnt signaling pathway. Impaired ability to activate expression of pre-rRNA." evidence="5 8">
    <original>Y</original>
    <variation>A</variation>
    <location>
        <position position="170"/>
    </location>
</feature>
<feature type="mutagenesis site" description="Impaired binding to histone H3K4me3 and H3R8me2a." evidence="8">
    <original>Y</original>
    <variation>A</variation>
    <location>
        <position position="177"/>
    </location>
</feature>
<feature type="mutagenesis site" description="Impaired binding to histone H3K4me3 and H3R8me2a." evidence="7 8">
    <original>D</original>
    <variation>A</variation>
    <variation>R</variation>
    <location>
        <position position="184"/>
    </location>
</feature>
<feature type="mutagenesis site" description="Impaired binding to histone H3K4me3." evidence="7">
    <original>D</original>
    <variation>A</variation>
    <variation>R</variation>
    <location>
        <position position="189"/>
    </location>
</feature>
<feature type="mutagenesis site" description="Impaired binding to histone H3K4me3 and H3R8me2a and impaired ability to activate the Wnt signaling pathway." evidence="8">
    <original>F</original>
    <variation>R</variation>
    <location>
        <position position="251"/>
    </location>
</feature>
<feature type="sequence conflict" description="In Ref. 6; BAG52466." evidence="13" ref="6">
    <original>P</original>
    <variation>S</variation>
    <location>
        <position position="49"/>
    </location>
</feature>
<feature type="strand" evidence="25">
    <location>
        <begin position="57"/>
        <end position="62"/>
    </location>
</feature>
<feature type="strand" evidence="22">
    <location>
        <begin position="65"/>
        <end position="67"/>
    </location>
</feature>
<feature type="strand" evidence="25">
    <location>
        <begin position="70"/>
        <end position="79"/>
    </location>
</feature>
<feature type="strand" evidence="25">
    <location>
        <begin position="86"/>
        <end position="91"/>
    </location>
</feature>
<feature type="strand" evidence="25">
    <location>
        <begin position="98"/>
        <end position="101"/>
    </location>
</feature>
<feature type="turn" evidence="25">
    <location>
        <begin position="102"/>
        <end position="104"/>
    </location>
</feature>
<feature type="strand" evidence="25">
    <location>
        <begin position="108"/>
        <end position="113"/>
    </location>
</feature>
<feature type="strand" evidence="23">
    <location>
        <begin position="117"/>
        <end position="119"/>
    </location>
</feature>
<feature type="helix" evidence="25">
    <location>
        <begin position="126"/>
        <end position="132"/>
    </location>
</feature>
<feature type="strand" evidence="25">
    <location>
        <begin position="136"/>
        <end position="142"/>
    </location>
</feature>
<feature type="strand" evidence="20">
    <location>
        <begin position="144"/>
        <end position="146"/>
    </location>
</feature>
<feature type="strand" evidence="25">
    <location>
        <begin position="148"/>
        <end position="158"/>
    </location>
</feature>
<feature type="strand" evidence="25">
    <location>
        <begin position="160"/>
        <end position="162"/>
    </location>
</feature>
<feature type="strand" evidence="25">
    <location>
        <begin position="166"/>
        <end position="170"/>
    </location>
</feature>
<feature type="strand" evidence="25">
    <location>
        <begin position="173"/>
        <end position="179"/>
    </location>
</feature>
<feature type="helix" evidence="25">
    <location>
        <begin position="181"/>
        <end position="186"/>
    </location>
</feature>
<feature type="strand" evidence="25">
    <location>
        <begin position="190"/>
        <end position="192"/>
    </location>
</feature>
<feature type="helix" evidence="24">
    <location>
        <begin position="206"/>
        <end position="209"/>
    </location>
</feature>
<feature type="strand" evidence="25">
    <location>
        <begin position="217"/>
        <end position="220"/>
    </location>
</feature>
<feature type="turn" evidence="21">
    <location>
        <begin position="223"/>
        <end position="225"/>
    </location>
</feature>
<feature type="strand" evidence="25">
    <location>
        <begin position="228"/>
        <end position="235"/>
    </location>
</feature>
<feature type="strand" evidence="21">
    <location>
        <begin position="237"/>
        <end position="239"/>
    </location>
</feature>
<feature type="strand" evidence="25">
    <location>
        <begin position="242"/>
        <end position="247"/>
    </location>
</feature>
<feature type="strand" evidence="25">
    <location>
        <begin position="254"/>
        <end position="257"/>
    </location>
</feature>
<keyword id="KW-0002">3D-structure</keyword>
<keyword id="KW-0007">Acetylation</keyword>
<keyword id="KW-0131">Cell cycle</keyword>
<keyword id="KW-0156">Chromatin regulator</keyword>
<keyword id="KW-0217">Developmental protein</keyword>
<keyword id="KW-1017">Isopeptide bond</keyword>
<keyword id="KW-0469">Meiosis</keyword>
<keyword id="KW-0539">Nucleus</keyword>
<keyword id="KW-0597">Phosphoprotein</keyword>
<keyword id="KW-1267">Proteomics identification</keyword>
<keyword id="KW-1185">Reference proteome</keyword>
<keyword id="KW-0677">Repeat</keyword>
<keyword id="KW-0832">Ubl conjugation</keyword>
<keyword id="KW-0879">Wnt signaling pathway</keyword>